<protein>
    <recommendedName>
        <fullName evidence="1">Anti-adapter protein IraM</fullName>
    </recommendedName>
</protein>
<gene>
    <name evidence="1" type="primary">iraM</name>
    <name type="ordered locus">ESA_01660</name>
</gene>
<accession>A7MGG4</accession>
<organism>
    <name type="scientific">Cronobacter sakazakii (strain ATCC BAA-894)</name>
    <name type="common">Enterobacter sakazakii</name>
    <dbReference type="NCBI Taxonomy" id="290339"/>
    <lineage>
        <taxon>Bacteria</taxon>
        <taxon>Pseudomonadati</taxon>
        <taxon>Pseudomonadota</taxon>
        <taxon>Gammaproteobacteria</taxon>
        <taxon>Enterobacterales</taxon>
        <taxon>Enterobacteriaceae</taxon>
        <taxon>Cronobacter</taxon>
    </lineage>
</organism>
<reference key="1">
    <citation type="journal article" date="2010" name="PLoS ONE">
        <title>Genome sequence of Cronobacter sakazakii BAA-894 and comparative genomic hybridization analysis with other Cronobacter species.</title>
        <authorList>
            <person name="Kucerova E."/>
            <person name="Clifton S.W."/>
            <person name="Xia X.Q."/>
            <person name="Long F."/>
            <person name="Porwollik S."/>
            <person name="Fulton L."/>
            <person name="Fronick C."/>
            <person name="Minx P."/>
            <person name="Kyung K."/>
            <person name="Warren W."/>
            <person name="Fulton R."/>
            <person name="Feng D."/>
            <person name="Wollam A."/>
            <person name="Shah N."/>
            <person name="Bhonagiri V."/>
            <person name="Nash W.E."/>
            <person name="Hallsworth-Pepin K."/>
            <person name="Wilson R.K."/>
            <person name="McClelland M."/>
            <person name="Forsythe S.J."/>
        </authorList>
    </citation>
    <scope>NUCLEOTIDE SEQUENCE [LARGE SCALE GENOMIC DNA]</scope>
    <source>
        <strain>ATCC BAA-894</strain>
    </source>
</reference>
<evidence type="ECO:0000255" key="1">
    <source>
        <dbReference type="HAMAP-Rule" id="MF_01199"/>
    </source>
</evidence>
<evidence type="ECO:0000305" key="2"/>
<comment type="function">
    <text evidence="1">Involved in the stabilization of the sigma stress factor RpoS.</text>
</comment>
<comment type="subcellular location">
    <subcellularLocation>
        <location evidence="1">Cytoplasm</location>
    </subcellularLocation>
</comment>
<comment type="similarity">
    <text evidence="1">Belongs to the IraM/RssC family.</text>
</comment>
<comment type="sequence caution" evidence="2">
    <conflict type="erroneous initiation">
        <sequence resource="EMBL-CDS" id="ABU76914"/>
    </conflict>
</comment>
<dbReference type="EMBL" id="CP000783">
    <property type="protein sequence ID" value="ABU76914.1"/>
    <property type="status" value="ALT_INIT"/>
    <property type="molecule type" value="Genomic_DNA"/>
</dbReference>
<dbReference type="SMR" id="A7MGG4"/>
<dbReference type="KEGG" id="esa:ESA_01660"/>
<dbReference type="HOGENOM" id="CLU_143527_1_0_6"/>
<dbReference type="Proteomes" id="UP000000260">
    <property type="component" value="Chromosome"/>
</dbReference>
<dbReference type="GO" id="GO:0005737">
    <property type="term" value="C:cytoplasm"/>
    <property type="evidence" value="ECO:0007669"/>
    <property type="project" value="UniProtKB-SubCell"/>
</dbReference>
<dbReference type="GO" id="GO:0009267">
    <property type="term" value="P:cellular response to starvation"/>
    <property type="evidence" value="ECO:0007669"/>
    <property type="project" value="UniProtKB-UniRule"/>
</dbReference>
<dbReference type="Gene3D" id="2.40.50.650">
    <property type="match status" value="1"/>
</dbReference>
<dbReference type="HAMAP" id="MF_01199">
    <property type="entry name" value="Anti_adapt_IraM"/>
    <property type="match status" value="1"/>
</dbReference>
<dbReference type="InterPro" id="IPR014448">
    <property type="entry name" value="Anti-adapter_IraM"/>
</dbReference>
<dbReference type="InterPro" id="IPR038679">
    <property type="entry name" value="PmrD_sf"/>
</dbReference>
<dbReference type="NCBIfam" id="NF007393">
    <property type="entry name" value="PRK09919.1"/>
    <property type="match status" value="1"/>
</dbReference>
<name>IRAM_CROS8</name>
<keyword id="KW-0963">Cytoplasm</keyword>
<keyword id="KW-1185">Reference proteome</keyword>
<keyword id="KW-0346">Stress response</keyword>
<proteinExistence type="inferred from homology"/>
<sequence length="111" mass="12757">MNWRVVDSVVSTDTNSVFTLISSQQSFKLILWYKATFYLSSGDTLSINGASITVNNHPVELTLYRTTVYNARFWQTIVNSNTHCAGNHRQSVGRCGYRRKCKLLYCPFQKH</sequence>
<feature type="chain" id="PRO_0000337881" description="Anti-adapter protein IraM">
    <location>
        <begin position="1"/>
        <end position="111"/>
    </location>
</feature>